<accession>Q6G941</accession>
<feature type="chain" id="PRO_0000176581" description="Transcription antitermination protein NusB">
    <location>
        <begin position="1"/>
        <end position="129"/>
    </location>
</feature>
<comment type="function">
    <text evidence="1">Involved in transcription antitermination. Required for transcription of ribosomal RNA (rRNA) genes. Binds specifically to the boxA antiterminator sequence of the ribosomal RNA (rrn) operons.</text>
</comment>
<comment type="similarity">
    <text evidence="1">Belongs to the NusB family.</text>
</comment>
<keyword id="KW-0694">RNA-binding</keyword>
<keyword id="KW-0804">Transcription</keyword>
<keyword id="KW-0889">Transcription antitermination</keyword>
<keyword id="KW-0805">Transcription regulation</keyword>
<organism>
    <name type="scientific">Staphylococcus aureus (strain MSSA476)</name>
    <dbReference type="NCBI Taxonomy" id="282459"/>
    <lineage>
        <taxon>Bacteria</taxon>
        <taxon>Bacillati</taxon>
        <taxon>Bacillota</taxon>
        <taxon>Bacilli</taxon>
        <taxon>Bacillales</taxon>
        <taxon>Staphylococcaceae</taxon>
        <taxon>Staphylococcus</taxon>
    </lineage>
</organism>
<name>NUSB_STAAS</name>
<evidence type="ECO:0000255" key="1">
    <source>
        <dbReference type="HAMAP-Rule" id="MF_00073"/>
    </source>
</evidence>
<protein>
    <recommendedName>
        <fullName evidence="1">Transcription antitermination protein NusB</fullName>
    </recommendedName>
    <alternativeName>
        <fullName evidence="1">Antitermination factor NusB</fullName>
    </alternativeName>
</protein>
<proteinExistence type="inferred from homology"/>
<gene>
    <name evidence="1" type="primary">nusB</name>
    <name type="ordered locus">SAS1463</name>
</gene>
<sequence length="129" mass="15061">MSRKESRVQAFQTLFQLEMKDSDLTINEAISFIKDDNPDLDFEFIHWLVSGVKDHEPVLDETISPYLKDWTIARLLKTDRIILRMATYEILHSDTPAKVVMNEAVELTKQFSDDDHYKFINGVLSNIKK</sequence>
<dbReference type="EMBL" id="BX571857">
    <property type="protein sequence ID" value="CAG43254.1"/>
    <property type="molecule type" value="Genomic_DNA"/>
</dbReference>
<dbReference type="RefSeq" id="WP_000087385.1">
    <property type="nucleotide sequence ID" value="NC_002953.3"/>
</dbReference>
<dbReference type="SMR" id="Q6G941"/>
<dbReference type="KEGG" id="sas:SAS1463"/>
<dbReference type="HOGENOM" id="CLU_087843_3_3_9"/>
<dbReference type="GO" id="GO:0005829">
    <property type="term" value="C:cytosol"/>
    <property type="evidence" value="ECO:0007669"/>
    <property type="project" value="TreeGrafter"/>
</dbReference>
<dbReference type="GO" id="GO:0003723">
    <property type="term" value="F:RNA binding"/>
    <property type="evidence" value="ECO:0007669"/>
    <property type="project" value="UniProtKB-UniRule"/>
</dbReference>
<dbReference type="GO" id="GO:0006353">
    <property type="term" value="P:DNA-templated transcription termination"/>
    <property type="evidence" value="ECO:0007669"/>
    <property type="project" value="UniProtKB-UniRule"/>
</dbReference>
<dbReference type="GO" id="GO:0031564">
    <property type="term" value="P:transcription antitermination"/>
    <property type="evidence" value="ECO:0007669"/>
    <property type="project" value="UniProtKB-KW"/>
</dbReference>
<dbReference type="FunFam" id="1.10.940.10:FF:000011">
    <property type="entry name" value="Transcription antitermination protein NusB"/>
    <property type="match status" value="1"/>
</dbReference>
<dbReference type="Gene3D" id="1.10.940.10">
    <property type="entry name" value="NusB-like"/>
    <property type="match status" value="1"/>
</dbReference>
<dbReference type="HAMAP" id="MF_00073">
    <property type="entry name" value="NusB"/>
    <property type="match status" value="1"/>
</dbReference>
<dbReference type="InterPro" id="IPR035926">
    <property type="entry name" value="NusB-like_sf"/>
</dbReference>
<dbReference type="InterPro" id="IPR011605">
    <property type="entry name" value="NusB_fam"/>
</dbReference>
<dbReference type="InterPro" id="IPR006027">
    <property type="entry name" value="NusB_RsmB_TIM44"/>
</dbReference>
<dbReference type="NCBIfam" id="TIGR01951">
    <property type="entry name" value="nusB"/>
    <property type="match status" value="1"/>
</dbReference>
<dbReference type="PANTHER" id="PTHR11078:SF3">
    <property type="entry name" value="ANTITERMINATION NUSB DOMAIN-CONTAINING PROTEIN"/>
    <property type="match status" value="1"/>
</dbReference>
<dbReference type="PANTHER" id="PTHR11078">
    <property type="entry name" value="N UTILIZATION SUBSTANCE PROTEIN B-RELATED"/>
    <property type="match status" value="1"/>
</dbReference>
<dbReference type="Pfam" id="PF01029">
    <property type="entry name" value="NusB"/>
    <property type="match status" value="1"/>
</dbReference>
<dbReference type="SUPFAM" id="SSF48013">
    <property type="entry name" value="NusB-like"/>
    <property type="match status" value="1"/>
</dbReference>
<reference key="1">
    <citation type="journal article" date="2004" name="Proc. Natl. Acad. Sci. U.S.A.">
        <title>Complete genomes of two clinical Staphylococcus aureus strains: evidence for the rapid evolution of virulence and drug resistance.</title>
        <authorList>
            <person name="Holden M.T.G."/>
            <person name="Feil E.J."/>
            <person name="Lindsay J.A."/>
            <person name="Peacock S.J."/>
            <person name="Day N.P.J."/>
            <person name="Enright M.C."/>
            <person name="Foster T.J."/>
            <person name="Moore C.E."/>
            <person name="Hurst L."/>
            <person name="Atkin R."/>
            <person name="Barron A."/>
            <person name="Bason N."/>
            <person name="Bentley S.D."/>
            <person name="Chillingworth C."/>
            <person name="Chillingworth T."/>
            <person name="Churcher C."/>
            <person name="Clark L."/>
            <person name="Corton C."/>
            <person name="Cronin A."/>
            <person name="Doggett J."/>
            <person name="Dowd L."/>
            <person name="Feltwell T."/>
            <person name="Hance Z."/>
            <person name="Harris B."/>
            <person name="Hauser H."/>
            <person name="Holroyd S."/>
            <person name="Jagels K."/>
            <person name="James K.D."/>
            <person name="Lennard N."/>
            <person name="Line A."/>
            <person name="Mayes R."/>
            <person name="Moule S."/>
            <person name="Mungall K."/>
            <person name="Ormond D."/>
            <person name="Quail M.A."/>
            <person name="Rabbinowitsch E."/>
            <person name="Rutherford K.M."/>
            <person name="Sanders M."/>
            <person name="Sharp S."/>
            <person name="Simmonds M."/>
            <person name="Stevens K."/>
            <person name="Whitehead S."/>
            <person name="Barrell B.G."/>
            <person name="Spratt B.G."/>
            <person name="Parkhill J."/>
        </authorList>
    </citation>
    <scope>NUCLEOTIDE SEQUENCE [LARGE SCALE GENOMIC DNA]</scope>
    <source>
        <strain>MSSA476</strain>
    </source>
</reference>